<dbReference type="EC" id="1.4.3.5" evidence="1"/>
<dbReference type="EMBL" id="CP000440">
    <property type="protein sequence ID" value="ABI88172.1"/>
    <property type="molecule type" value="Genomic_DNA"/>
</dbReference>
<dbReference type="RefSeq" id="WP_011657761.1">
    <property type="nucleotide sequence ID" value="NC_008390.1"/>
</dbReference>
<dbReference type="SMR" id="Q0BCF1"/>
<dbReference type="GeneID" id="93085181"/>
<dbReference type="KEGG" id="bam:Bamb_2616"/>
<dbReference type="PATRIC" id="fig|339670.21.peg.2285"/>
<dbReference type="eggNOG" id="COG0259">
    <property type="taxonomic scope" value="Bacteria"/>
</dbReference>
<dbReference type="UniPathway" id="UPA01068">
    <property type="reaction ID" value="UER00304"/>
</dbReference>
<dbReference type="UniPathway" id="UPA01068">
    <property type="reaction ID" value="UER00305"/>
</dbReference>
<dbReference type="Proteomes" id="UP000000662">
    <property type="component" value="Chromosome 1"/>
</dbReference>
<dbReference type="GO" id="GO:0010181">
    <property type="term" value="F:FMN binding"/>
    <property type="evidence" value="ECO:0007669"/>
    <property type="project" value="UniProtKB-UniRule"/>
</dbReference>
<dbReference type="GO" id="GO:0004733">
    <property type="term" value="F:pyridoxamine phosphate oxidase activity"/>
    <property type="evidence" value="ECO:0007669"/>
    <property type="project" value="UniProtKB-UniRule"/>
</dbReference>
<dbReference type="GO" id="GO:0008615">
    <property type="term" value="P:pyridoxine biosynthetic process"/>
    <property type="evidence" value="ECO:0007669"/>
    <property type="project" value="UniProtKB-KW"/>
</dbReference>
<dbReference type="FunFam" id="2.30.110.10:FF:000005">
    <property type="entry name" value="NAD(P)H-hydrate epimerase"/>
    <property type="match status" value="1"/>
</dbReference>
<dbReference type="Gene3D" id="2.30.110.10">
    <property type="entry name" value="Electron Transport, Fmn-binding Protein, Chain A"/>
    <property type="match status" value="1"/>
</dbReference>
<dbReference type="HAMAP" id="MF_01629">
    <property type="entry name" value="PdxH"/>
    <property type="match status" value="1"/>
</dbReference>
<dbReference type="InterPro" id="IPR000659">
    <property type="entry name" value="Pyridox_Oxase"/>
</dbReference>
<dbReference type="InterPro" id="IPR019740">
    <property type="entry name" value="Pyridox_Oxase_CS"/>
</dbReference>
<dbReference type="InterPro" id="IPR011576">
    <property type="entry name" value="Pyridox_Oxase_N"/>
</dbReference>
<dbReference type="InterPro" id="IPR019576">
    <property type="entry name" value="Pyridoxamine_oxidase_dimer_C"/>
</dbReference>
<dbReference type="InterPro" id="IPR012349">
    <property type="entry name" value="Split_barrel_FMN-bd"/>
</dbReference>
<dbReference type="NCBIfam" id="TIGR00558">
    <property type="entry name" value="pdxH"/>
    <property type="match status" value="1"/>
</dbReference>
<dbReference type="NCBIfam" id="NF004231">
    <property type="entry name" value="PRK05679.1"/>
    <property type="match status" value="1"/>
</dbReference>
<dbReference type="PANTHER" id="PTHR10851:SF0">
    <property type="entry name" value="PYRIDOXINE-5'-PHOSPHATE OXIDASE"/>
    <property type="match status" value="1"/>
</dbReference>
<dbReference type="PANTHER" id="PTHR10851">
    <property type="entry name" value="PYRIDOXINE-5-PHOSPHATE OXIDASE"/>
    <property type="match status" value="1"/>
</dbReference>
<dbReference type="Pfam" id="PF10590">
    <property type="entry name" value="PNP_phzG_C"/>
    <property type="match status" value="1"/>
</dbReference>
<dbReference type="Pfam" id="PF01243">
    <property type="entry name" value="PNPOx_N"/>
    <property type="match status" value="1"/>
</dbReference>
<dbReference type="PIRSF" id="PIRSF000190">
    <property type="entry name" value="Pyd_amn-ph_oxd"/>
    <property type="match status" value="1"/>
</dbReference>
<dbReference type="SUPFAM" id="SSF50475">
    <property type="entry name" value="FMN-binding split barrel"/>
    <property type="match status" value="1"/>
</dbReference>
<dbReference type="PROSITE" id="PS01064">
    <property type="entry name" value="PYRIDOX_OXIDASE"/>
    <property type="match status" value="1"/>
</dbReference>
<sequence length="214" mass="24275">MTTLADLRINYSRASLDEADVAPDPFAQFDRWFKEALAAKLPEPNTMTLATVGENGRPSARIVLIKGVDERGFVFFTNYESRKGRDLAAHPYAALLFYWIELERQVRIEGRIEKTSTDESDRYFASRPLGSRIGAWASEQSAVIDSRATLEAREKAVAERYGENPPRPPQWGGYRVVPDAIEFWQGRPSRLHDRLLYTRDAAAAPDWTISRLSP</sequence>
<organism>
    <name type="scientific">Burkholderia ambifaria (strain ATCC BAA-244 / DSM 16087 / CCUG 44356 / LMG 19182 / AMMD)</name>
    <name type="common">Burkholderia cepacia (strain AMMD)</name>
    <dbReference type="NCBI Taxonomy" id="339670"/>
    <lineage>
        <taxon>Bacteria</taxon>
        <taxon>Pseudomonadati</taxon>
        <taxon>Pseudomonadota</taxon>
        <taxon>Betaproteobacteria</taxon>
        <taxon>Burkholderiales</taxon>
        <taxon>Burkholderiaceae</taxon>
        <taxon>Burkholderia</taxon>
        <taxon>Burkholderia cepacia complex</taxon>
    </lineage>
</organism>
<accession>Q0BCF1</accession>
<evidence type="ECO:0000255" key="1">
    <source>
        <dbReference type="HAMAP-Rule" id="MF_01629"/>
    </source>
</evidence>
<gene>
    <name evidence="1" type="primary">pdxH</name>
    <name type="ordered locus">Bamb_2616</name>
</gene>
<comment type="function">
    <text evidence="1">Catalyzes the oxidation of either pyridoxine 5'-phosphate (PNP) or pyridoxamine 5'-phosphate (PMP) into pyridoxal 5'-phosphate (PLP).</text>
</comment>
<comment type="catalytic activity">
    <reaction evidence="1">
        <text>pyridoxamine 5'-phosphate + O2 + H2O = pyridoxal 5'-phosphate + H2O2 + NH4(+)</text>
        <dbReference type="Rhea" id="RHEA:15817"/>
        <dbReference type="ChEBI" id="CHEBI:15377"/>
        <dbReference type="ChEBI" id="CHEBI:15379"/>
        <dbReference type="ChEBI" id="CHEBI:16240"/>
        <dbReference type="ChEBI" id="CHEBI:28938"/>
        <dbReference type="ChEBI" id="CHEBI:58451"/>
        <dbReference type="ChEBI" id="CHEBI:597326"/>
        <dbReference type="EC" id="1.4.3.5"/>
    </reaction>
</comment>
<comment type="catalytic activity">
    <reaction evidence="1">
        <text>pyridoxine 5'-phosphate + O2 = pyridoxal 5'-phosphate + H2O2</text>
        <dbReference type="Rhea" id="RHEA:15149"/>
        <dbReference type="ChEBI" id="CHEBI:15379"/>
        <dbReference type="ChEBI" id="CHEBI:16240"/>
        <dbReference type="ChEBI" id="CHEBI:58589"/>
        <dbReference type="ChEBI" id="CHEBI:597326"/>
        <dbReference type="EC" id="1.4.3.5"/>
    </reaction>
</comment>
<comment type="cofactor">
    <cofactor evidence="1">
        <name>FMN</name>
        <dbReference type="ChEBI" id="CHEBI:58210"/>
    </cofactor>
    <text evidence="1">Binds 1 FMN per subunit.</text>
</comment>
<comment type="pathway">
    <text evidence="1">Cofactor metabolism; pyridoxal 5'-phosphate salvage; pyridoxal 5'-phosphate from pyridoxamine 5'-phosphate: step 1/1.</text>
</comment>
<comment type="pathway">
    <text evidence="1">Cofactor metabolism; pyridoxal 5'-phosphate salvage; pyridoxal 5'-phosphate from pyridoxine 5'-phosphate: step 1/1.</text>
</comment>
<comment type="subunit">
    <text evidence="1">Homodimer.</text>
</comment>
<comment type="similarity">
    <text evidence="1">Belongs to the pyridoxamine 5'-phosphate oxidase family.</text>
</comment>
<feature type="chain" id="PRO_0000292290" description="Pyridoxine/pyridoxamine 5'-phosphate oxidase">
    <location>
        <begin position="1"/>
        <end position="214"/>
    </location>
</feature>
<feature type="binding site" evidence="1">
    <location>
        <begin position="8"/>
        <end position="11"/>
    </location>
    <ligand>
        <name>substrate</name>
    </ligand>
</feature>
<feature type="binding site" evidence="1">
    <location>
        <begin position="61"/>
        <end position="66"/>
    </location>
    <ligand>
        <name>FMN</name>
        <dbReference type="ChEBI" id="CHEBI:58210"/>
    </ligand>
</feature>
<feature type="binding site" evidence="1">
    <location>
        <position position="66"/>
    </location>
    <ligand>
        <name>substrate</name>
    </ligand>
</feature>
<feature type="binding site" evidence="1">
    <location>
        <begin position="76"/>
        <end position="77"/>
    </location>
    <ligand>
        <name>FMN</name>
        <dbReference type="ChEBI" id="CHEBI:58210"/>
    </ligand>
</feature>
<feature type="binding site" evidence="1">
    <location>
        <position position="82"/>
    </location>
    <ligand>
        <name>FMN</name>
        <dbReference type="ChEBI" id="CHEBI:58210"/>
    </ligand>
</feature>
<feature type="binding site" evidence="1">
    <location>
        <position position="83"/>
    </location>
    <ligand>
        <name>FMN</name>
        <dbReference type="ChEBI" id="CHEBI:58210"/>
    </ligand>
</feature>
<feature type="binding site" evidence="1">
    <location>
        <position position="105"/>
    </location>
    <ligand>
        <name>FMN</name>
        <dbReference type="ChEBI" id="CHEBI:58210"/>
    </ligand>
</feature>
<feature type="binding site" evidence="1">
    <location>
        <position position="123"/>
    </location>
    <ligand>
        <name>substrate</name>
    </ligand>
</feature>
<feature type="binding site" evidence="1">
    <location>
        <position position="127"/>
    </location>
    <ligand>
        <name>substrate</name>
    </ligand>
</feature>
<feature type="binding site" evidence="1">
    <location>
        <position position="131"/>
    </location>
    <ligand>
        <name>substrate</name>
    </ligand>
</feature>
<feature type="binding site" evidence="1">
    <location>
        <begin position="140"/>
        <end position="141"/>
    </location>
    <ligand>
        <name>FMN</name>
        <dbReference type="ChEBI" id="CHEBI:58210"/>
    </ligand>
</feature>
<feature type="binding site" evidence="1">
    <location>
        <position position="184"/>
    </location>
    <ligand>
        <name>FMN</name>
        <dbReference type="ChEBI" id="CHEBI:58210"/>
    </ligand>
</feature>
<feature type="binding site" evidence="1">
    <location>
        <begin position="190"/>
        <end position="192"/>
    </location>
    <ligand>
        <name>substrate</name>
    </ligand>
</feature>
<feature type="binding site" evidence="1">
    <location>
        <position position="194"/>
    </location>
    <ligand>
        <name>FMN</name>
        <dbReference type="ChEBI" id="CHEBI:58210"/>
    </ligand>
</feature>
<protein>
    <recommendedName>
        <fullName evidence="1">Pyridoxine/pyridoxamine 5'-phosphate oxidase</fullName>
        <ecNumber evidence="1">1.4.3.5</ecNumber>
    </recommendedName>
    <alternativeName>
        <fullName evidence="1">PNP/PMP oxidase</fullName>
        <shortName evidence="1">PNPOx</shortName>
    </alternativeName>
    <alternativeName>
        <fullName evidence="1">Pyridoxal 5'-phosphate synthase</fullName>
    </alternativeName>
</protein>
<keyword id="KW-0285">Flavoprotein</keyword>
<keyword id="KW-0288">FMN</keyword>
<keyword id="KW-0560">Oxidoreductase</keyword>
<keyword id="KW-0664">Pyridoxine biosynthesis</keyword>
<name>PDXH_BURCM</name>
<reference key="1">
    <citation type="submission" date="2006-08" db="EMBL/GenBank/DDBJ databases">
        <title>Complete sequence of chromosome 1 of Burkholderia cepacia AMMD.</title>
        <authorList>
            <person name="Copeland A."/>
            <person name="Lucas S."/>
            <person name="Lapidus A."/>
            <person name="Barry K."/>
            <person name="Detter J.C."/>
            <person name="Glavina del Rio T."/>
            <person name="Hammon N."/>
            <person name="Israni S."/>
            <person name="Pitluck S."/>
            <person name="Bruce D."/>
            <person name="Chain P."/>
            <person name="Malfatti S."/>
            <person name="Shin M."/>
            <person name="Vergez L."/>
            <person name="Schmutz J."/>
            <person name="Larimer F."/>
            <person name="Land M."/>
            <person name="Hauser L."/>
            <person name="Kyrpides N."/>
            <person name="Kim E."/>
            <person name="Parke J."/>
            <person name="Coenye T."/>
            <person name="Konstantinidis K."/>
            <person name="Ramette A."/>
            <person name="Tiedje J."/>
            <person name="Richardson P."/>
        </authorList>
    </citation>
    <scope>NUCLEOTIDE SEQUENCE [LARGE SCALE GENOMIC DNA]</scope>
    <source>
        <strain>ATCC BAA-244 / DSM 16087 / CCUG 44356 / LMG 19182 / AMMD</strain>
    </source>
</reference>
<proteinExistence type="inferred from homology"/>